<dbReference type="EC" id="2.7.1.199" evidence="1"/>
<dbReference type="EMBL" id="AE005672">
    <property type="protein sequence ID" value="AAK74896.1"/>
    <property type="molecule type" value="Genomic_DNA"/>
</dbReference>
<dbReference type="EMBL" id="L20559">
    <property type="protein sequence ID" value="AAA26881.1"/>
    <property type="molecule type" value="Genomic_DNA"/>
</dbReference>
<dbReference type="PIR" id="G95087">
    <property type="entry name" value="G95087"/>
</dbReference>
<dbReference type="RefSeq" id="WP_000974062.1">
    <property type="nucleotide sequence ID" value="NZ_CP155539.1"/>
</dbReference>
<dbReference type="SMR" id="P35595"/>
<dbReference type="PaxDb" id="170187-SP_0758"/>
<dbReference type="EnsemblBacteria" id="AAK74896">
    <property type="protein sequence ID" value="AAK74896"/>
    <property type="gene ID" value="SP_0758"/>
</dbReference>
<dbReference type="KEGG" id="spn:SP_0758"/>
<dbReference type="eggNOG" id="COG1263">
    <property type="taxonomic scope" value="Bacteria"/>
</dbReference>
<dbReference type="eggNOG" id="COG1264">
    <property type="taxonomic scope" value="Bacteria"/>
</dbReference>
<dbReference type="eggNOG" id="COG2190">
    <property type="taxonomic scope" value="Bacteria"/>
</dbReference>
<dbReference type="PhylomeDB" id="P35595"/>
<dbReference type="BioCyc" id="SPNE170187:G1FZB-775-MONOMER"/>
<dbReference type="Proteomes" id="UP000000585">
    <property type="component" value="Chromosome"/>
</dbReference>
<dbReference type="GO" id="GO:0005886">
    <property type="term" value="C:plasma membrane"/>
    <property type="evidence" value="ECO:0007669"/>
    <property type="project" value="UniProtKB-SubCell"/>
</dbReference>
<dbReference type="GO" id="GO:0016301">
    <property type="term" value="F:kinase activity"/>
    <property type="evidence" value="ECO:0007669"/>
    <property type="project" value="UniProtKB-KW"/>
</dbReference>
<dbReference type="GO" id="GO:0008982">
    <property type="term" value="F:protein-N(PI)-phosphohistidine-sugar phosphotransferase activity"/>
    <property type="evidence" value="ECO:0007669"/>
    <property type="project" value="InterPro"/>
</dbReference>
<dbReference type="GO" id="GO:0090563">
    <property type="term" value="F:protein-phosphocysteine-sugar phosphotransferase activity"/>
    <property type="evidence" value="ECO:0007669"/>
    <property type="project" value="TreeGrafter"/>
</dbReference>
<dbReference type="GO" id="GO:0009401">
    <property type="term" value="P:phosphoenolpyruvate-dependent sugar phosphotransferase system"/>
    <property type="evidence" value="ECO:0007669"/>
    <property type="project" value="UniProtKB-KW"/>
</dbReference>
<dbReference type="CDD" id="cd00212">
    <property type="entry name" value="PTS_IIB_glc"/>
    <property type="match status" value="1"/>
</dbReference>
<dbReference type="FunFam" id="2.70.70.10:FF:000001">
    <property type="entry name" value="PTS system glucose-specific IIA component"/>
    <property type="match status" value="1"/>
</dbReference>
<dbReference type="Gene3D" id="2.70.70.10">
    <property type="entry name" value="Glucose Permease (Domain IIA)"/>
    <property type="match status" value="1"/>
</dbReference>
<dbReference type="Gene3D" id="3.30.1360.60">
    <property type="entry name" value="Glucose permease domain IIB"/>
    <property type="match status" value="1"/>
</dbReference>
<dbReference type="InterPro" id="IPR011055">
    <property type="entry name" value="Dup_hybrid_motif"/>
</dbReference>
<dbReference type="InterPro" id="IPR036878">
    <property type="entry name" value="Glu_permease_IIB"/>
</dbReference>
<dbReference type="InterPro" id="IPR018113">
    <property type="entry name" value="PTrfase_EIIB_Cys"/>
</dbReference>
<dbReference type="InterPro" id="IPR001127">
    <property type="entry name" value="PTS_EIIA_1_perm"/>
</dbReference>
<dbReference type="InterPro" id="IPR003352">
    <property type="entry name" value="PTS_EIIC"/>
</dbReference>
<dbReference type="InterPro" id="IPR013013">
    <property type="entry name" value="PTS_EIIC_1"/>
</dbReference>
<dbReference type="InterPro" id="IPR050429">
    <property type="entry name" value="PTS_Glucose_EIICBA"/>
</dbReference>
<dbReference type="InterPro" id="IPR001996">
    <property type="entry name" value="PTS_IIB_1"/>
</dbReference>
<dbReference type="InterPro" id="IPR011300">
    <property type="entry name" value="PTS_IIBC"/>
</dbReference>
<dbReference type="NCBIfam" id="TIGR00826">
    <property type="entry name" value="EIIB_glc"/>
    <property type="match status" value="1"/>
</dbReference>
<dbReference type="NCBIfam" id="TIGR00830">
    <property type="entry name" value="PTBA"/>
    <property type="match status" value="1"/>
</dbReference>
<dbReference type="NCBIfam" id="TIGR02003">
    <property type="entry name" value="PTS-II-BC-unk1"/>
    <property type="match status" value="1"/>
</dbReference>
<dbReference type="PANTHER" id="PTHR30009">
    <property type="entry name" value="CYTOCHROME C-TYPE SYNTHESIS PROTEIN AND PTS TRANSMEMBRANE COMPONENT"/>
    <property type="match status" value="1"/>
</dbReference>
<dbReference type="PANTHER" id="PTHR30009:SF8">
    <property type="entry name" value="PTS SYSTEM, IIBC COMPONENT"/>
    <property type="match status" value="1"/>
</dbReference>
<dbReference type="Pfam" id="PF00358">
    <property type="entry name" value="PTS_EIIA_1"/>
    <property type="match status" value="1"/>
</dbReference>
<dbReference type="Pfam" id="PF00367">
    <property type="entry name" value="PTS_EIIB"/>
    <property type="match status" value="1"/>
</dbReference>
<dbReference type="Pfam" id="PF02378">
    <property type="entry name" value="PTS_EIIC"/>
    <property type="match status" value="1"/>
</dbReference>
<dbReference type="SUPFAM" id="SSF51261">
    <property type="entry name" value="Duplicated hybrid motif"/>
    <property type="match status" value="1"/>
</dbReference>
<dbReference type="SUPFAM" id="SSF55604">
    <property type="entry name" value="Glucose permease domain IIB"/>
    <property type="match status" value="1"/>
</dbReference>
<dbReference type="PROSITE" id="PS51093">
    <property type="entry name" value="PTS_EIIA_TYPE_1"/>
    <property type="match status" value="1"/>
</dbReference>
<dbReference type="PROSITE" id="PS00371">
    <property type="entry name" value="PTS_EIIA_TYPE_1_HIS"/>
    <property type="match status" value="1"/>
</dbReference>
<dbReference type="PROSITE" id="PS51098">
    <property type="entry name" value="PTS_EIIB_TYPE_1"/>
    <property type="match status" value="1"/>
</dbReference>
<dbReference type="PROSITE" id="PS01035">
    <property type="entry name" value="PTS_EIIB_TYPE_1_CYS"/>
    <property type="match status" value="1"/>
</dbReference>
<dbReference type="PROSITE" id="PS51103">
    <property type="entry name" value="PTS_EIIC_TYPE_1"/>
    <property type="match status" value="1"/>
</dbReference>
<evidence type="ECO:0000250" key="1">
    <source>
        <dbReference type="UniProtKB" id="Q57071"/>
    </source>
</evidence>
<evidence type="ECO:0000255" key="2">
    <source>
        <dbReference type="PROSITE-ProRule" id="PRU00416"/>
    </source>
</evidence>
<evidence type="ECO:0000255" key="3">
    <source>
        <dbReference type="PROSITE-ProRule" id="PRU00421"/>
    </source>
</evidence>
<evidence type="ECO:0000255" key="4">
    <source>
        <dbReference type="PROSITE-ProRule" id="PRU00426"/>
    </source>
</evidence>
<evidence type="ECO:0000305" key="5"/>
<organism>
    <name type="scientific">Streptococcus pneumoniae serotype 4 (strain ATCC BAA-334 / TIGR4)</name>
    <dbReference type="NCBI Taxonomy" id="170187"/>
    <lineage>
        <taxon>Bacteria</taxon>
        <taxon>Bacillati</taxon>
        <taxon>Bacillota</taxon>
        <taxon>Bacilli</taxon>
        <taxon>Lactobacillales</taxon>
        <taxon>Streptococcaceae</taxon>
        <taxon>Streptococcus</taxon>
    </lineage>
</organism>
<comment type="function">
    <text evidence="1">The phosphoenolpyruvate-dependent sugar phosphotransferase system (sugar PTS), a major carbohydrate active transport system, catalyzes the phosphorylation of incoming sugar substrates concomitantly with their translocation across the cell membrane. This system is involved in glucose transport.</text>
</comment>
<comment type="catalytic activity">
    <reaction evidence="1">
        <text>N(pros)-phospho-L-histidyl-[protein] + D-glucose(out) = D-glucose 6-phosphate(in) + L-histidyl-[protein]</text>
        <dbReference type="Rhea" id="RHEA:33367"/>
        <dbReference type="Rhea" id="RHEA-COMP:9745"/>
        <dbReference type="Rhea" id="RHEA-COMP:9746"/>
        <dbReference type="ChEBI" id="CHEBI:4167"/>
        <dbReference type="ChEBI" id="CHEBI:29979"/>
        <dbReference type="ChEBI" id="CHEBI:61548"/>
        <dbReference type="ChEBI" id="CHEBI:64837"/>
        <dbReference type="EC" id="2.7.1.199"/>
    </reaction>
</comment>
<comment type="subcellular location">
    <subcellularLocation>
        <location evidence="4">Cell membrane</location>
        <topology evidence="4">Multi-pass membrane protein</topology>
    </subcellularLocation>
</comment>
<comment type="domain">
    <text evidence="4">The EIIC domain forms the PTS system translocation channel and contains the specific substrate-binding site.</text>
</comment>
<comment type="domain">
    <text evidence="3">The EIIB domain is phosphorylated by phospho-EIIA on a cysteinyl or histidyl residue, depending on the transported sugar. Then, it transfers the phosphoryl group to the sugar substrate concomitantly with the sugar uptake processed by the EIIC domain.</text>
</comment>
<comment type="domain">
    <text evidence="2">The EIIA domain is phosphorylated by phospho-HPr on a histidyl residue. Then, it transfers the phosphoryl group to the EIIB domain.</text>
</comment>
<feature type="chain" id="PRO_0000186561" description="PTS system glucose-specific EIICBA component">
    <location>
        <begin position="1"/>
        <end position="726"/>
    </location>
</feature>
<feature type="transmembrane region" description="Helical" evidence="4">
    <location>
        <begin position="18"/>
        <end position="38"/>
    </location>
</feature>
<feature type="transmembrane region" description="Helical" evidence="4">
    <location>
        <begin position="62"/>
        <end position="82"/>
    </location>
</feature>
<feature type="transmembrane region" description="Helical" evidence="4">
    <location>
        <begin position="90"/>
        <end position="110"/>
    </location>
</feature>
<feature type="transmembrane region" description="Helical" evidence="4">
    <location>
        <begin position="139"/>
        <end position="159"/>
    </location>
</feature>
<feature type="transmembrane region" description="Helical" evidence="4">
    <location>
        <begin position="184"/>
        <end position="204"/>
    </location>
</feature>
<feature type="transmembrane region" description="Helical" evidence="4">
    <location>
        <begin position="311"/>
        <end position="331"/>
    </location>
</feature>
<feature type="transmembrane region" description="Helical" evidence="4">
    <location>
        <begin position="344"/>
        <end position="364"/>
    </location>
</feature>
<feature type="transmembrane region" description="Helical" evidence="4">
    <location>
        <begin position="365"/>
        <end position="385"/>
    </location>
</feature>
<feature type="transmembrane region" description="Helical" evidence="4">
    <location>
        <begin position="419"/>
        <end position="439"/>
    </location>
</feature>
<feature type="domain" description="PTS EIIC type-1" evidence="4">
    <location>
        <begin position="1"/>
        <end position="453"/>
    </location>
</feature>
<feature type="domain" description="PTS EIIB type-1" evidence="3">
    <location>
        <begin position="473"/>
        <end position="555"/>
    </location>
</feature>
<feature type="domain" description="PTS EIIA type-1" evidence="2">
    <location>
        <begin position="596"/>
        <end position="700"/>
    </location>
</feature>
<feature type="active site" description="Phosphocysteine intermediate; for EIIB activity" evidence="3">
    <location>
        <position position="495"/>
    </location>
</feature>
<feature type="active site" description="Tele-phosphohistidine intermediate; for EIIA activity" evidence="2">
    <location>
        <position position="648"/>
    </location>
</feature>
<feature type="sequence conflict" description="In Ref. 2; AAA26881." evidence="5" ref="2">
    <original>AA</original>
    <variation>DD</variation>
    <location>
        <begin position="471"/>
        <end position="472"/>
    </location>
</feature>
<feature type="sequence conflict" description="In Ref. 2; AAA26881." evidence="5" ref="2">
    <original>A</original>
    <variation>V</variation>
    <location>
        <position position="566"/>
    </location>
</feature>
<keyword id="KW-1003">Cell membrane</keyword>
<keyword id="KW-0418">Kinase</keyword>
<keyword id="KW-0472">Membrane</keyword>
<keyword id="KW-0598">Phosphotransferase system</keyword>
<keyword id="KW-1185">Reference proteome</keyword>
<keyword id="KW-0762">Sugar transport</keyword>
<keyword id="KW-0808">Transferase</keyword>
<keyword id="KW-0812">Transmembrane</keyword>
<keyword id="KW-1133">Transmembrane helix</keyword>
<keyword id="KW-0813">Transport</keyword>
<name>PTG3C_STRPN</name>
<protein>
    <recommendedName>
        <fullName evidence="1">PTS system glucose-specific EIICBA component</fullName>
        <ecNumber evidence="1">2.7.1.199</ecNumber>
    </recommendedName>
    <alternativeName>
        <fullName>EII-Glc/EIII-Glc</fullName>
    </alternativeName>
    <alternativeName>
        <fullName evidence="1">EIICBA-Glc</fullName>
    </alternativeName>
    <alternativeName>
        <fullName evidence="5">EIICBA-Glc 1</fullName>
    </alternativeName>
    <domain>
        <recommendedName>
            <fullName evidence="1">Glucose permease IIC component</fullName>
        </recommendedName>
        <alternativeName>
            <fullName evidence="1">PTS system glucose-specific EIIC component</fullName>
        </alternativeName>
    </domain>
    <domain>
        <recommendedName>
            <fullName evidence="1">Glucose-specific phosphotransferase enzyme IIB component</fullName>
        </recommendedName>
        <alternativeName>
            <fullName evidence="1">PTS system glucose-specific EIIB component</fullName>
        </alternativeName>
    </domain>
    <domain>
        <recommendedName>
            <fullName evidence="1">Glucose-specific phosphotransferase enzyme IIA component</fullName>
        </recommendedName>
        <alternativeName>
            <fullName evidence="1">PTS system glucose-specific EIIA component</fullName>
        </alternativeName>
    </domain>
</protein>
<gene>
    <name type="primary">exp5</name>
    <name type="ordered locus">SP_0758</name>
</gene>
<proteinExistence type="inferred from homology"/>
<reference key="1">
    <citation type="journal article" date="2001" name="Science">
        <title>Complete genome sequence of a virulent isolate of Streptococcus pneumoniae.</title>
        <authorList>
            <person name="Tettelin H."/>
            <person name="Nelson K.E."/>
            <person name="Paulsen I.T."/>
            <person name="Eisen J.A."/>
            <person name="Read T.D."/>
            <person name="Peterson S.N."/>
            <person name="Heidelberg J.F."/>
            <person name="DeBoy R.T."/>
            <person name="Haft D.H."/>
            <person name="Dodson R.J."/>
            <person name="Durkin A.S."/>
            <person name="Gwinn M.L."/>
            <person name="Kolonay J.F."/>
            <person name="Nelson W.C."/>
            <person name="Peterson J.D."/>
            <person name="Umayam L.A."/>
            <person name="White O."/>
            <person name="Salzberg S.L."/>
            <person name="Lewis M.R."/>
            <person name="Radune D."/>
            <person name="Holtzapple E.K."/>
            <person name="Khouri H.M."/>
            <person name="Wolf A.M."/>
            <person name="Utterback T.R."/>
            <person name="Hansen C.L."/>
            <person name="McDonald L.A."/>
            <person name="Feldblyum T.V."/>
            <person name="Angiuoli S.V."/>
            <person name="Dickinson T."/>
            <person name="Hickey E.K."/>
            <person name="Holt I.E."/>
            <person name="Loftus B.J."/>
            <person name="Yang F."/>
            <person name="Smith H.O."/>
            <person name="Venter J.C."/>
            <person name="Dougherty B.A."/>
            <person name="Morrison D.A."/>
            <person name="Hollingshead S.K."/>
            <person name="Fraser C.M."/>
        </authorList>
    </citation>
    <scope>NUCLEOTIDE SEQUENCE [LARGE SCALE GENOMIC DNA]</scope>
    <source>
        <strain>ATCC BAA-334 / TIGR4</strain>
    </source>
</reference>
<reference key="2">
    <citation type="journal article" date="1993" name="Mol. Microbiol.">
        <title>Genetic identification of exported proteins in Streptococcus pneumoniae.</title>
        <authorList>
            <person name="Pearce B.J."/>
            <person name="Yin Y.B."/>
            <person name="Masure H.R."/>
        </authorList>
    </citation>
    <scope>NUCLEOTIDE SEQUENCE [GENOMIC DNA] OF 468-575</scope>
    <source>
        <strain>R6x</strain>
    </source>
</reference>
<sequence>MMKDTFKNVLSFEFWQKFGKALMVVIAVMPAAGLMISIGKSIVMINPTFAPLVITGGILEQIGWGVIGNLHILFALAIGGSWAKERAGGAFAAGLAFILINRITGTIFGVSGDMLKNPDAMVTTFFGGSIKVADYFISVLEAPALNMGVFVGIISGFVGATAYNKYYNFRKLPDALSFFNGKRFVPFVVILRSAIAAILLAAFWPVVQTGINNFGIWIANSQETAPILAPFLYGTLERLLLPFGLHHMLTIPMNYTALGGTYDILTGAAKGTQVFGQDPLWLAWVTDLVNLKGTDASQYQHLLDTVHPARFKVGQMIGSFGILMGVIVAIYRNVDADKKHKYKGMMIATALATFLTGVTEPIEYMFMFIATPMYLVYSLVQGAAFAMADVVNLRMHSFGSIEFLTRTPIAISAGIGMDIVNFVWVTVLFAVIMYFIANFMIQKFNYATPGRNGNYETAEGSEETSSEVKVAAGSQAVNIINLLGGRVNIVDVDACMTRLRVTVKDADKVGNAEQWKAEGAMGLVMKGQGVQAIYGPKADILKSDIQDILDSGEIIPETLPSQMTEAQQNTVHFKDLTEEVYSVADGQVVALEQVKDPVFAQKMMGDGFAVEPANGNIVSPVSGTVSSIFPTKHAFGIVTEAGLEVLVHIGLDTVSLEGKPFTVHVAEGQKVAAGDLLVTADLDAIRAAGRETSTVVVFTNGDAIKSVKLEKTGSLAAKTAVAKVEL</sequence>
<accession>P35595</accession>